<comment type="function">
    <text evidence="1">Catalyzes the stereoinversion of LL-2,6-diaminopimelate (L,L-DAP) to meso-diaminopimelate (meso-DAP), a precursor of L-lysine.</text>
</comment>
<comment type="catalytic activity">
    <reaction evidence="1">
        <text>(2S,6S)-2,6-diaminopimelate = meso-2,6-diaminopimelate</text>
        <dbReference type="Rhea" id="RHEA:15393"/>
        <dbReference type="ChEBI" id="CHEBI:57609"/>
        <dbReference type="ChEBI" id="CHEBI:57791"/>
        <dbReference type="EC" id="5.1.1.7"/>
    </reaction>
</comment>
<comment type="pathway">
    <text evidence="1">Amino-acid biosynthesis; L-lysine biosynthesis via DAP pathway; DL-2,6-diaminopimelate from LL-2,6-diaminopimelate: step 1/1.</text>
</comment>
<comment type="subunit">
    <text evidence="1">Homodimer.</text>
</comment>
<comment type="subcellular location">
    <subcellularLocation>
        <location evidence="1">Cytoplasm</location>
    </subcellularLocation>
</comment>
<comment type="similarity">
    <text evidence="1">Belongs to the diaminopimelate epimerase family.</text>
</comment>
<gene>
    <name evidence="1" type="primary">dapF</name>
    <name type="ordered locus">UNCMA_11190</name>
    <name type="ORF">RCIX1964</name>
</gene>
<name>DAPF_METAR</name>
<proteinExistence type="inferred from homology"/>
<protein>
    <recommendedName>
        <fullName evidence="1">Diaminopimelate epimerase</fullName>
        <shortName evidence="1">DAP epimerase</shortName>
        <ecNumber evidence="1">5.1.1.7</ecNumber>
    </recommendedName>
    <alternativeName>
        <fullName evidence="1">PLP-independent amino acid racemase</fullName>
    </alternativeName>
</protein>
<sequence>MTKIKFTKMHGNGNDFIVIDEFENPVPEEKKAAFAKKVCHRRFGIGADGVLFLAKPLHTSLHMRIFNEDGSEAEMCGNGIRCFVKYAVDNGHMNPGKDKVETKAGILEVEARIEDGKTLVKVSMGKPLFDPKKIPAAGLNNFINKPLHGYEVTAVNTGVPHAVIFVDDVNAVDLMKVAPEIRYDLKTFPKGINVNFVQREGHNLRVRTYERGVEGETLSCGTGSVASAAVARYLGYTRDETTVYTAGGQLNISFVSDIAYMEGPAETVYEGEIDVDFSAL</sequence>
<keyword id="KW-0028">Amino-acid biosynthesis</keyword>
<keyword id="KW-0963">Cytoplasm</keyword>
<keyword id="KW-0413">Isomerase</keyword>
<keyword id="KW-0457">Lysine biosynthesis</keyword>
<keyword id="KW-1185">Reference proteome</keyword>
<accession>Q0W3B6</accession>
<dbReference type="EC" id="5.1.1.7" evidence="1"/>
<dbReference type="EMBL" id="AM114193">
    <property type="protein sequence ID" value="CAJ37127.1"/>
    <property type="molecule type" value="Genomic_DNA"/>
</dbReference>
<dbReference type="RefSeq" id="WP_012035447.1">
    <property type="nucleotide sequence ID" value="NC_009464.1"/>
</dbReference>
<dbReference type="SMR" id="Q0W3B6"/>
<dbReference type="STRING" id="351160.RCIX1964"/>
<dbReference type="GeneID" id="5144870"/>
<dbReference type="KEGG" id="rci:RCIX1964"/>
<dbReference type="PATRIC" id="fig|351160.9.peg.1155"/>
<dbReference type="eggNOG" id="arCOG02255">
    <property type="taxonomic scope" value="Archaea"/>
</dbReference>
<dbReference type="OrthoDB" id="358699at2157"/>
<dbReference type="UniPathway" id="UPA00034">
    <property type="reaction ID" value="UER00025"/>
</dbReference>
<dbReference type="Proteomes" id="UP000000663">
    <property type="component" value="Chromosome"/>
</dbReference>
<dbReference type="GO" id="GO:0005829">
    <property type="term" value="C:cytosol"/>
    <property type="evidence" value="ECO:0007669"/>
    <property type="project" value="TreeGrafter"/>
</dbReference>
<dbReference type="GO" id="GO:0008837">
    <property type="term" value="F:diaminopimelate epimerase activity"/>
    <property type="evidence" value="ECO:0007669"/>
    <property type="project" value="UniProtKB-UniRule"/>
</dbReference>
<dbReference type="GO" id="GO:0009089">
    <property type="term" value="P:lysine biosynthetic process via diaminopimelate"/>
    <property type="evidence" value="ECO:0007669"/>
    <property type="project" value="UniProtKB-UniRule"/>
</dbReference>
<dbReference type="FunFam" id="3.10.310.10:FF:000001">
    <property type="entry name" value="Diaminopimelate epimerase"/>
    <property type="match status" value="1"/>
</dbReference>
<dbReference type="Gene3D" id="3.10.310.10">
    <property type="entry name" value="Diaminopimelate Epimerase, Chain A, domain 1"/>
    <property type="match status" value="2"/>
</dbReference>
<dbReference type="HAMAP" id="MF_00197">
    <property type="entry name" value="DAP_epimerase"/>
    <property type="match status" value="1"/>
</dbReference>
<dbReference type="InterPro" id="IPR018510">
    <property type="entry name" value="DAP_epimerase_AS"/>
</dbReference>
<dbReference type="InterPro" id="IPR001653">
    <property type="entry name" value="DAP_epimerase_DapF"/>
</dbReference>
<dbReference type="NCBIfam" id="TIGR00652">
    <property type="entry name" value="DapF"/>
    <property type="match status" value="1"/>
</dbReference>
<dbReference type="PANTHER" id="PTHR31689:SF0">
    <property type="entry name" value="DIAMINOPIMELATE EPIMERASE"/>
    <property type="match status" value="1"/>
</dbReference>
<dbReference type="PANTHER" id="PTHR31689">
    <property type="entry name" value="DIAMINOPIMELATE EPIMERASE, CHLOROPLASTIC"/>
    <property type="match status" value="1"/>
</dbReference>
<dbReference type="Pfam" id="PF01678">
    <property type="entry name" value="DAP_epimerase"/>
    <property type="match status" value="2"/>
</dbReference>
<dbReference type="SUPFAM" id="SSF54506">
    <property type="entry name" value="Diaminopimelate epimerase-like"/>
    <property type="match status" value="2"/>
</dbReference>
<dbReference type="PROSITE" id="PS01326">
    <property type="entry name" value="DAP_EPIMERASE"/>
    <property type="match status" value="1"/>
</dbReference>
<feature type="chain" id="PRO_1000011979" description="Diaminopimelate epimerase">
    <location>
        <begin position="1"/>
        <end position="280"/>
    </location>
</feature>
<feature type="active site" description="Proton donor" evidence="1">
    <location>
        <position position="76"/>
    </location>
</feature>
<feature type="active site" description="Proton acceptor" evidence="1">
    <location>
        <position position="220"/>
    </location>
</feature>
<feature type="binding site" evidence="1">
    <location>
        <position position="14"/>
    </location>
    <ligand>
        <name>substrate</name>
    </ligand>
</feature>
<feature type="binding site" evidence="1">
    <location>
        <position position="67"/>
    </location>
    <ligand>
        <name>substrate</name>
    </ligand>
</feature>
<feature type="binding site" evidence="1">
    <location>
        <begin position="77"/>
        <end position="78"/>
    </location>
    <ligand>
        <name>substrate</name>
    </ligand>
</feature>
<feature type="binding site" evidence="1">
    <location>
        <position position="193"/>
    </location>
    <ligand>
        <name>substrate</name>
    </ligand>
</feature>
<feature type="binding site" evidence="1">
    <location>
        <begin position="210"/>
        <end position="211"/>
    </location>
    <ligand>
        <name>substrate</name>
    </ligand>
</feature>
<feature type="binding site" evidence="1">
    <location>
        <begin position="221"/>
        <end position="222"/>
    </location>
    <ligand>
        <name>substrate</name>
    </ligand>
</feature>
<feature type="site" description="Could be important to modulate the pK values of the two catalytic cysteine residues" evidence="1">
    <location>
        <position position="161"/>
    </location>
</feature>
<feature type="site" description="Could be important to modulate the pK values of the two catalytic cysteine residues" evidence="1">
    <location>
        <position position="210"/>
    </location>
</feature>
<reference key="1">
    <citation type="journal article" date="2006" name="Science">
        <title>Genome of rice cluster I archaea -- the key methane producers in the rice rhizosphere.</title>
        <authorList>
            <person name="Erkel C."/>
            <person name="Kube M."/>
            <person name="Reinhardt R."/>
            <person name="Liesack W."/>
        </authorList>
    </citation>
    <scope>NUCLEOTIDE SEQUENCE [LARGE SCALE GENOMIC DNA]</scope>
    <source>
        <strain>DSM 22066 / NBRC 105507 / MRE50</strain>
    </source>
</reference>
<evidence type="ECO:0000255" key="1">
    <source>
        <dbReference type="HAMAP-Rule" id="MF_00197"/>
    </source>
</evidence>
<organism>
    <name type="scientific">Methanocella arvoryzae (strain DSM 22066 / NBRC 105507 / MRE50)</name>
    <dbReference type="NCBI Taxonomy" id="351160"/>
    <lineage>
        <taxon>Archaea</taxon>
        <taxon>Methanobacteriati</taxon>
        <taxon>Methanobacteriota</taxon>
        <taxon>Stenosarchaea group</taxon>
        <taxon>Methanomicrobia</taxon>
        <taxon>Methanocellales</taxon>
        <taxon>Methanocellaceae</taxon>
        <taxon>Methanocella</taxon>
    </lineage>
</organism>